<keyword id="KW-0067">ATP-binding</keyword>
<keyword id="KW-0143">Chaperone</keyword>
<keyword id="KW-0963">Cytoplasm</keyword>
<keyword id="KW-0547">Nucleotide-binding</keyword>
<keyword id="KW-1185">Reference proteome</keyword>
<keyword id="KW-0346">Stress response</keyword>
<organism>
    <name type="scientific">Shewanella baltica (strain OS155 / ATCC BAA-1091)</name>
    <dbReference type="NCBI Taxonomy" id="325240"/>
    <lineage>
        <taxon>Bacteria</taxon>
        <taxon>Pseudomonadati</taxon>
        <taxon>Pseudomonadota</taxon>
        <taxon>Gammaproteobacteria</taxon>
        <taxon>Alteromonadales</taxon>
        <taxon>Shewanellaceae</taxon>
        <taxon>Shewanella</taxon>
    </lineage>
</organism>
<evidence type="ECO:0000255" key="1">
    <source>
        <dbReference type="HAMAP-Rule" id="MF_00249"/>
    </source>
</evidence>
<evidence type="ECO:0000256" key="2">
    <source>
        <dbReference type="SAM" id="MobiDB-lite"/>
    </source>
</evidence>
<comment type="function">
    <text evidence="1">ATPase subunit of a proteasome-like degradation complex; this subunit has chaperone activity. The binding of ATP and its subsequent hydrolysis by HslU are essential for unfolding of protein substrates subsequently hydrolyzed by HslV. HslU recognizes the N-terminal part of its protein substrates and unfolds these before they are guided to HslV for hydrolysis.</text>
</comment>
<comment type="subunit">
    <text evidence="1">A double ring-shaped homohexamer of HslV is capped on each side by a ring-shaped HslU homohexamer. The assembly of the HslU/HslV complex is dependent on binding of ATP.</text>
</comment>
<comment type="subcellular location">
    <subcellularLocation>
        <location evidence="1">Cytoplasm</location>
    </subcellularLocation>
</comment>
<comment type="similarity">
    <text evidence="1">Belongs to the ClpX chaperone family. HslU subfamily.</text>
</comment>
<accession>A3D9C6</accession>
<reference key="1">
    <citation type="submission" date="2007-02" db="EMBL/GenBank/DDBJ databases">
        <title>Complete sequence of chromosome of Shewanella baltica OS155.</title>
        <authorList>
            <consortium name="US DOE Joint Genome Institute"/>
            <person name="Copeland A."/>
            <person name="Lucas S."/>
            <person name="Lapidus A."/>
            <person name="Barry K."/>
            <person name="Detter J.C."/>
            <person name="Glavina del Rio T."/>
            <person name="Hammon N."/>
            <person name="Israni S."/>
            <person name="Dalin E."/>
            <person name="Tice H."/>
            <person name="Pitluck S."/>
            <person name="Sims D.R."/>
            <person name="Brettin T."/>
            <person name="Bruce D."/>
            <person name="Han C."/>
            <person name="Tapia R."/>
            <person name="Brainard J."/>
            <person name="Schmutz J."/>
            <person name="Larimer F."/>
            <person name="Land M."/>
            <person name="Hauser L."/>
            <person name="Kyrpides N."/>
            <person name="Mikhailova N."/>
            <person name="Brettar I."/>
            <person name="Klappenbach J."/>
            <person name="Konstantinidis K."/>
            <person name="Rodrigues J."/>
            <person name="Tiedje J."/>
            <person name="Richardson P."/>
        </authorList>
    </citation>
    <scope>NUCLEOTIDE SEQUENCE [LARGE SCALE GENOMIC DNA]</scope>
    <source>
        <strain>OS155 / ATCC BAA-1091</strain>
    </source>
</reference>
<feature type="chain" id="PRO_1000012800" description="ATP-dependent protease ATPase subunit HslU">
    <location>
        <begin position="1"/>
        <end position="442"/>
    </location>
</feature>
<feature type="region of interest" description="Disordered" evidence="2">
    <location>
        <begin position="137"/>
        <end position="156"/>
    </location>
</feature>
<feature type="binding site" evidence="1">
    <location>
        <position position="18"/>
    </location>
    <ligand>
        <name>ATP</name>
        <dbReference type="ChEBI" id="CHEBI:30616"/>
    </ligand>
</feature>
<feature type="binding site" evidence="1">
    <location>
        <begin position="60"/>
        <end position="65"/>
    </location>
    <ligand>
        <name>ATP</name>
        <dbReference type="ChEBI" id="CHEBI:30616"/>
    </ligand>
</feature>
<feature type="binding site" evidence="1">
    <location>
        <position position="255"/>
    </location>
    <ligand>
        <name>ATP</name>
        <dbReference type="ChEBI" id="CHEBI:30616"/>
    </ligand>
</feature>
<feature type="binding site" evidence="1">
    <location>
        <position position="320"/>
    </location>
    <ligand>
        <name>ATP</name>
        <dbReference type="ChEBI" id="CHEBI:30616"/>
    </ligand>
</feature>
<feature type="binding site" evidence="1">
    <location>
        <position position="392"/>
    </location>
    <ligand>
        <name>ATP</name>
        <dbReference type="ChEBI" id="CHEBI:30616"/>
    </ligand>
</feature>
<gene>
    <name evidence="1" type="primary">hslU</name>
    <name type="ordered locus">Sbal_3868</name>
</gene>
<proteinExistence type="inferred from homology"/>
<dbReference type="EMBL" id="CP000563">
    <property type="protein sequence ID" value="ABN63339.1"/>
    <property type="molecule type" value="Genomic_DNA"/>
</dbReference>
<dbReference type="RefSeq" id="WP_006083301.1">
    <property type="nucleotide sequence ID" value="NC_009052.1"/>
</dbReference>
<dbReference type="SMR" id="A3D9C6"/>
<dbReference type="STRING" id="325240.Sbal_3868"/>
<dbReference type="GeneID" id="11770797"/>
<dbReference type="KEGG" id="sbl:Sbal_3868"/>
<dbReference type="HOGENOM" id="CLU_033123_0_0_6"/>
<dbReference type="OrthoDB" id="9804062at2"/>
<dbReference type="Proteomes" id="UP000001557">
    <property type="component" value="Chromosome"/>
</dbReference>
<dbReference type="GO" id="GO:0009376">
    <property type="term" value="C:HslUV protease complex"/>
    <property type="evidence" value="ECO:0007669"/>
    <property type="project" value="UniProtKB-UniRule"/>
</dbReference>
<dbReference type="GO" id="GO:0005524">
    <property type="term" value="F:ATP binding"/>
    <property type="evidence" value="ECO:0007669"/>
    <property type="project" value="UniProtKB-UniRule"/>
</dbReference>
<dbReference type="GO" id="GO:0016887">
    <property type="term" value="F:ATP hydrolysis activity"/>
    <property type="evidence" value="ECO:0007669"/>
    <property type="project" value="InterPro"/>
</dbReference>
<dbReference type="GO" id="GO:0008233">
    <property type="term" value="F:peptidase activity"/>
    <property type="evidence" value="ECO:0007669"/>
    <property type="project" value="InterPro"/>
</dbReference>
<dbReference type="GO" id="GO:0036402">
    <property type="term" value="F:proteasome-activating activity"/>
    <property type="evidence" value="ECO:0007669"/>
    <property type="project" value="UniProtKB-UniRule"/>
</dbReference>
<dbReference type="GO" id="GO:0043335">
    <property type="term" value="P:protein unfolding"/>
    <property type="evidence" value="ECO:0007669"/>
    <property type="project" value="UniProtKB-UniRule"/>
</dbReference>
<dbReference type="GO" id="GO:0051603">
    <property type="term" value="P:proteolysis involved in protein catabolic process"/>
    <property type="evidence" value="ECO:0007669"/>
    <property type="project" value="TreeGrafter"/>
</dbReference>
<dbReference type="CDD" id="cd19498">
    <property type="entry name" value="RecA-like_HslU"/>
    <property type="match status" value="1"/>
</dbReference>
<dbReference type="FunFam" id="1.10.8.10:FF:000028">
    <property type="entry name" value="ATP-dependent protease ATPase subunit HslU"/>
    <property type="match status" value="1"/>
</dbReference>
<dbReference type="FunFam" id="1.10.8.60:FF:000027">
    <property type="entry name" value="ATP-dependent protease ATPase subunit HslU"/>
    <property type="match status" value="1"/>
</dbReference>
<dbReference type="FunFam" id="3.40.50.300:FF:000213">
    <property type="entry name" value="ATP-dependent protease ATPase subunit HslU"/>
    <property type="match status" value="1"/>
</dbReference>
<dbReference type="FunFam" id="3.40.50.300:FF:000220">
    <property type="entry name" value="ATP-dependent protease ATPase subunit HslU"/>
    <property type="match status" value="1"/>
</dbReference>
<dbReference type="Gene3D" id="1.10.8.60">
    <property type="match status" value="1"/>
</dbReference>
<dbReference type="Gene3D" id="3.40.50.300">
    <property type="entry name" value="P-loop containing nucleotide triphosphate hydrolases"/>
    <property type="match status" value="2"/>
</dbReference>
<dbReference type="HAMAP" id="MF_00249">
    <property type="entry name" value="HslU"/>
    <property type="match status" value="1"/>
</dbReference>
<dbReference type="InterPro" id="IPR003593">
    <property type="entry name" value="AAA+_ATPase"/>
</dbReference>
<dbReference type="InterPro" id="IPR050052">
    <property type="entry name" value="ATP-dep_Clp_protease_ClpX"/>
</dbReference>
<dbReference type="InterPro" id="IPR003959">
    <property type="entry name" value="ATPase_AAA_core"/>
</dbReference>
<dbReference type="InterPro" id="IPR019489">
    <property type="entry name" value="Clp_ATPase_C"/>
</dbReference>
<dbReference type="InterPro" id="IPR004491">
    <property type="entry name" value="HslU"/>
</dbReference>
<dbReference type="InterPro" id="IPR027417">
    <property type="entry name" value="P-loop_NTPase"/>
</dbReference>
<dbReference type="NCBIfam" id="TIGR00390">
    <property type="entry name" value="hslU"/>
    <property type="match status" value="1"/>
</dbReference>
<dbReference type="NCBIfam" id="NF003544">
    <property type="entry name" value="PRK05201.1"/>
    <property type="match status" value="1"/>
</dbReference>
<dbReference type="PANTHER" id="PTHR48102">
    <property type="entry name" value="ATP-DEPENDENT CLP PROTEASE ATP-BINDING SUBUNIT CLPX-LIKE, MITOCHONDRIAL-RELATED"/>
    <property type="match status" value="1"/>
</dbReference>
<dbReference type="PANTHER" id="PTHR48102:SF3">
    <property type="entry name" value="ATP-DEPENDENT PROTEASE ATPASE SUBUNIT HSLU"/>
    <property type="match status" value="1"/>
</dbReference>
<dbReference type="Pfam" id="PF00004">
    <property type="entry name" value="AAA"/>
    <property type="match status" value="1"/>
</dbReference>
<dbReference type="Pfam" id="PF07724">
    <property type="entry name" value="AAA_2"/>
    <property type="match status" value="1"/>
</dbReference>
<dbReference type="SMART" id="SM00382">
    <property type="entry name" value="AAA"/>
    <property type="match status" value="1"/>
</dbReference>
<dbReference type="SMART" id="SM01086">
    <property type="entry name" value="ClpB_D2-small"/>
    <property type="match status" value="1"/>
</dbReference>
<dbReference type="SUPFAM" id="SSF52540">
    <property type="entry name" value="P-loop containing nucleoside triphosphate hydrolases"/>
    <property type="match status" value="1"/>
</dbReference>
<sequence>MSEMTPREIVHELDAHIIGQQKAKRSVAVALRNRWRRMQLDVDFRQEVTPKNILMIGPTGVGKTEIARRLAKLANAPFIKVEATKYTEVGYVGKEVEQIIRDLTDIAIKLTREQQMGKCRQRAEENAEERILDALLPKPKNDWESTETDSSSNTRQVFRKKLREGQLDDKEIDIDVAQPQVGVEIMSPPGMEEMTNQLQSLFKNMGQAPAKRRKMKIKEAFKLLIEEEAAKLVNQEDLKEQAIEMVEQHGIVFLDEIDKICKRGETSGPDVSREGVQRDLLPLIEGCTVTTKHGMVKTDHILFIASGAFQMSKPSDLIPELQGRLPIRVELDALSANDFKRILTEPHASLTEQYIALMNTEGVKVEFSESGIDSIAKAAWQVNERTENIGARRLHTVMEKLMEDISYEASEKSGSAFVIDADYVSAHLDNLVQDEDLSRFIL</sequence>
<protein>
    <recommendedName>
        <fullName evidence="1">ATP-dependent protease ATPase subunit HslU</fullName>
    </recommendedName>
    <alternativeName>
        <fullName evidence="1">Unfoldase HslU</fullName>
    </alternativeName>
</protein>
<name>HSLU_SHEB5</name>